<name>CPT1A_HUMAN</name>
<reference key="1">
    <citation type="journal article" date="1995" name="Proc. Natl. Acad. Sci. U.S.A.">
        <title>Human liver mitochondrial carnitine palmitoyltransferase I: characterization of its cDNA and chromosomal localization and partial analysis of the gene.</title>
        <authorList>
            <person name="Britton C.H."/>
            <person name="Schultz R.A."/>
            <person name="Zhang B."/>
            <person name="Esser V."/>
            <person name="Foster D.W."/>
            <person name="McGarry J.D."/>
        </authorList>
    </citation>
    <scope>NUCLEOTIDE SEQUENCE [MRNA] (ISOFORM 1)</scope>
    <source>
        <tissue>Liver</tissue>
    </source>
</reference>
<reference key="2">
    <citation type="journal article" date="2002" name="Hum. Genet.">
        <title>Organization of the human liver carnitine palmitoyltransferase 1 gene (CPT1A) and identification of novel mutations in hypoketotic hypoglycaemia.</title>
        <authorList>
            <person name="Gobin S."/>
            <person name="Bonnefont J.-P."/>
            <person name="Prip-Buus C."/>
            <person name="Mugnier C."/>
            <person name="Ferrec M."/>
            <person name="Demaugre F."/>
            <person name="Saudubray J.-M."/>
            <person name="Rostane H."/>
            <person name="Djouadi F."/>
            <person name="Wilcox W."/>
            <person name="Cederbaum S."/>
            <person name="Haas R."/>
            <person name="Nyhan W.L."/>
            <person name="Green A."/>
            <person name="Gray G."/>
            <person name="Girard J."/>
            <person name="Thuillier L."/>
        </authorList>
    </citation>
    <scope>NUCLEOTIDE SEQUENCE [GENOMIC DNA]</scope>
    <scope>VARIANTS CPT1AD VAL-414 AND CYS-498</scope>
    <scope>VARIANT THR-275</scope>
</reference>
<reference key="3">
    <citation type="submission" date="2003-08" db="EMBL/GenBank/DDBJ databases">
        <title>Cloning of human full-length CDSs in BD Creator(TM) system donor vector.</title>
        <authorList>
            <person name="Kalnine N."/>
            <person name="Chen X."/>
            <person name="Rolfs A."/>
            <person name="Halleck A."/>
            <person name="Hines L."/>
            <person name="Eisenstein S."/>
            <person name="Koundinya M."/>
            <person name="Raphael J."/>
            <person name="Moreira D."/>
            <person name="Kelley T."/>
            <person name="LaBaer J."/>
            <person name="Lin Y."/>
            <person name="Phelan M."/>
            <person name="Farmer A."/>
        </authorList>
    </citation>
    <scope>NUCLEOTIDE SEQUENCE [LARGE SCALE MRNA] (ISOFORM 2)</scope>
</reference>
<reference key="4">
    <citation type="journal article" date="2004" name="Genome Res.">
        <title>The status, quality, and expansion of the NIH full-length cDNA project: the Mammalian Gene Collection (MGC).</title>
        <authorList>
            <consortium name="The MGC Project Team"/>
        </authorList>
    </citation>
    <scope>NUCLEOTIDE SEQUENCE [LARGE SCALE MRNA] (ISOFORM 2)</scope>
    <source>
        <tissue>Eye</tissue>
    </source>
</reference>
<reference key="5">
    <citation type="journal article" date="2006" name="Proc. Natl. Acad. Sci. U.S.A.">
        <title>The brain-specific carnitine palmitoyltransferase-1c regulates energy homeostasis.</title>
        <authorList>
            <person name="Wolfgang M.J."/>
            <person name="Kurama T."/>
            <person name="Dai Y."/>
            <person name="Suwa A."/>
            <person name="Asaumi M."/>
            <person name="Matsumoto S."/>
            <person name="Cha S.H."/>
            <person name="Shimokawa T."/>
            <person name="Lane M.D."/>
        </authorList>
    </citation>
    <scope>FUNCTION</scope>
    <scope>CATALYTIC ACTIVITY</scope>
    <scope>MUTAGENESIS OF HIS-473</scope>
</reference>
<reference key="6">
    <citation type="journal article" date="2005" name="J. Mol. Biol.">
        <title>An intronic peroxisome proliferator-activated receptor-binding sequence mediates fatty acid induction of the human carnitine palmitoyltransferase 1A.</title>
        <authorList>
            <person name="Napal L."/>
            <person name="Marrero P.F."/>
            <person name="Haro D."/>
        </authorList>
    </citation>
    <scope>INDUCTION BY FATTY ACIDS</scope>
</reference>
<reference key="7">
    <citation type="journal article" date="2011" name="BMC Syst. Biol.">
        <title>Initial characterization of the human central proteome.</title>
        <authorList>
            <person name="Burkard T.R."/>
            <person name="Planyavsky M."/>
            <person name="Kaupe I."/>
            <person name="Breitwieser F.P."/>
            <person name="Buerckstuemmer T."/>
            <person name="Bennett K.L."/>
            <person name="Superti-Furga G."/>
            <person name="Colinge J."/>
        </authorList>
    </citation>
    <scope>IDENTIFICATION BY MASS SPECTROMETRY [LARGE SCALE ANALYSIS]</scope>
</reference>
<reference key="8">
    <citation type="journal article" date="2015" name="Proteomics">
        <title>N-terminome analysis of the human mitochondrial proteome.</title>
        <authorList>
            <person name="Vaca Jacome A.S."/>
            <person name="Rabilloud T."/>
            <person name="Schaeffer-Reiss C."/>
            <person name="Rompais M."/>
            <person name="Ayoub D."/>
            <person name="Lane L."/>
            <person name="Bairoch A."/>
            <person name="Van Dorsselaer A."/>
            <person name="Carapito C."/>
        </authorList>
    </citation>
    <scope>IDENTIFICATION BY MASS SPECTROMETRY [LARGE SCALE ANALYSIS]</scope>
</reference>
<reference key="9">
    <citation type="journal article" date="2018" name="Cell Rep.">
        <title>Carnitine Palmitoyltransferase 1A Has a Lysine Succinyltransferase Activity.</title>
        <authorList>
            <person name="Kurmi K."/>
            <person name="Hitosugi S."/>
            <person name="Wiese E.K."/>
            <person name="Boakye-Agyeman F."/>
            <person name="Gonsalves W.I."/>
            <person name="Lou Z."/>
            <person name="Karnitz L.M."/>
            <person name="Goetz M.P."/>
            <person name="Hitosugi T."/>
        </authorList>
    </citation>
    <scope>FUNCTION</scope>
    <scope>CATALYTIC ACTIVITY</scope>
    <scope>CHARACTERIZATION OF VARIANT CPT1AD GLU-710</scope>
</reference>
<reference key="10">
    <citation type="journal article" date="2023" name="Mol. Cell">
        <title>CPT1A induction following epigenetic perturbation promotes MAVS palmitoylation and activation to potentiate antitumor immunity.</title>
        <authorList>
            <person name="Zhang G."/>
            <person name="Jiang P."/>
            <person name="Tang W."/>
            <person name="Wang Y."/>
            <person name="Qiu F."/>
            <person name="An J."/>
            <person name="Zheng Y."/>
            <person name="Wu D."/>
            <person name="Zhou J."/>
            <person name="Neculai D."/>
            <person name="Shi Y."/>
            <person name="Sheng W."/>
        </authorList>
    </citation>
    <scope>FUNCTION</scope>
    <scope>INTERACTION WITH ZDHCC4</scope>
    <scope>MUTAGENESIS OF HIS-473</scope>
</reference>
<reference key="11">
    <citation type="journal article" date="2004" name="Biochem. J.">
        <title>Structural model of carnitine palmitoyltransferase I based on the carnitine acetyltransferase crystal.</title>
        <authorList>
            <person name="Morillas M."/>
            <person name="Lopez-Vinas E."/>
            <person name="Valencia A."/>
            <person name="Serra D."/>
            <person name="Gomez-Puertas P."/>
            <person name="Hegardt F.G."/>
            <person name="Asins G."/>
        </authorList>
    </citation>
    <scope>3D-STRUCTURE MODELING</scope>
</reference>
<reference key="12">
    <citation type="journal article" date="2011" name="J. Biol. Chem.">
        <title>An environment-dependent structural switch underlies the regulation of carnitine palmitoyltransferase 1A.</title>
        <authorList>
            <person name="Rao J.N."/>
            <person name="Warren G.Z."/>
            <person name="Estolt-Povedano S."/>
            <person name="Zammit V.A."/>
            <person name="Ulmer T.S."/>
        </authorList>
    </citation>
    <scope>STRUCTURE BY NMR OF 1-42</scope>
    <scope>DOMAIN</scope>
</reference>
<reference key="13">
    <citation type="journal article" date="1998" name="J. Clin. Invest.">
        <title>Molecular basis of hepatic carnitine palmitoyltransferase I deficiency.</title>
        <authorList>
            <person name="Ijlst L."/>
            <person name="Mandel H."/>
            <person name="Oostheim W."/>
            <person name="Ruiter J.P.N."/>
            <person name="Gutman A."/>
            <person name="Wanders R.J."/>
        </authorList>
    </citation>
    <scope>VARIANT CPT1AD GLY-454</scope>
    <scope>CHARACTERIZATION OF VARIANT CPT1AD GLY-454</scope>
    <scope>FUNCTION</scope>
    <scope>CATALYTIC ACTIVITY</scope>
</reference>
<reference key="14">
    <citation type="journal article" date="2001" name="J. Lipid Res.">
        <title>Molecular characterization of L-CPT I deficiency in six patients: insights into function of the native enzyme.</title>
        <authorList>
            <person name="Brown N.F."/>
            <person name="Mullur R.S."/>
            <person name="Subramanian I."/>
            <person name="Esser V."/>
            <person name="Bennett M.J."/>
            <person name="Saudubray J.-M."/>
            <person name="Feigenbaum A.S."/>
            <person name="Kobari J.A."/>
            <person name="Macleod P.M."/>
            <person name="McGarry J.D."/>
            <person name="Cohen J.C."/>
        </authorList>
    </citation>
    <scope>VARIANTS CPT1AD CYS-123; TRP-304; TRP-357; ARG-395 DEL; LEU-479 AND PRO-484</scope>
    <scope>VARIANT THR-275</scope>
</reference>
<reference key="15">
    <citation type="journal article" date="2001" name="Mol. Genet. Metab.">
        <title>Molecular and enzymatic characterization of a unique carnitine palmitoyltransferase 1A mutation in the Hutterite community.</title>
        <authorList>
            <person name="Prip-Buus C."/>
            <person name="Thuillier L."/>
            <person name="Abadi N."/>
            <person name="Prasad C."/>
            <person name="Dilling L."/>
            <person name="Klasing J."/>
            <person name="Demaugre F."/>
            <person name="Greenberg C.R."/>
            <person name="Haworth J.C."/>
            <person name="Droin V."/>
            <person name="Kadhom N."/>
            <person name="Gobin S."/>
            <person name="Kamoun P."/>
            <person name="Girard J."/>
            <person name="Bonnefont J.-P."/>
        </authorList>
    </citation>
    <scope>VARIANT CPT1AD GLU-710</scope>
    <scope>CHARACTERIZATION OF VARIANT CPT1AD GLU-710</scope>
    <scope>FUNCTION</scope>
    <scope>CATALYTIC ACTIVITY</scope>
    <scope>SUBCELLULAR LOCATION</scope>
    <scope>BIOPHYSICOCHEMICAL PROPERTIES</scope>
</reference>
<reference key="16">
    <citation type="journal article" date="2002" name="J. Hum. Genet.">
        <title>Expression analysis of two mutations in carnitine palmitoyltransferase IA deficiency.</title>
        <authorList>
            <person name="Ogawa E."/>
            <person name="Kanazawa M."/>
            <person name="Yamamoto S."/>
            <person name="Ohtsuka S."/>
            <person name="Ogawa A."/>
            <person name="Ohtake A."/>
            <person name="Takayanagi M."/>
            <person name="Kohno Y."/>
        </authorList>
    </citation>
    <scope>CHARACTERIZATION OF VARIANT CPT1AD GLY-360</scope>
</reference>
<reference key="17">
    <citation type="journal article" date="2003" name="J. Biol. Chem.">
        <title>Functional and structural basis of carnitine palmitoyltransferase 1A deficiency.</title>
        <authorList>
            <person name="Gobin S."/>
            <person name="Thuillier L."/>
            <person name="Jogl G."/>
            <person name="Faye A."/>
            <person name="Tong L."/>
            <person name="Chi M."/>
            <person name="Bonnefont J.-P."/>
            <person name="Girard J."/>
            <person name="Prip-Buus C."/>
        </authorList>
    </citation>
    <scope>VARIANT CPT1AD GLU-709</scope>
    <scope>CHARACTERIZATION OF VARIANTS CPT1AD THR-275; VAL-414; CYS-498; GLU-709 AND GLU-710</scope>
    <scope>SUBCELLULAR LOCATION</scope>
    <scope>FUNCTION</scope>
    <scope>CATALYTIC ACTIVITY</scope>
    <scope>ACTIVITY REGULATION</scope>
    <scope>BIOPHYSICOCHEMICAL PROPERTIES</scope>
</reference>
<reference key="18">
    <citation type="journal article" date="2004" name="J. Inherit. Metab. Dis.">
        <title>Successful long-term treatment of hepatic carnitine palmitoyltransferase I deficiency and a novel mutation.</title>
        <authorList>
            <person name="Stoler J.M."/>
            <person name="Sabry M.A."/>
            <person name="Hanley C."/>
            <person name="Hoppel C.L."/>
            <person name="Shih V.E."/>
        </authorList>
    </citation>
    <scope>VARIANT CPT1AD ILE-314</scope>
</reference>
<reference key="19">
    <citation type="journal article" date="2004" name="Mol. Genet. Metab.">
        <title>Novel mutations in CPT 1A define molecular heterogeneity of hepatic carnitine palmitoyltransferase I deficiency.</title>
        <authorList>
            <person name="Bennett M.J."/>
            <person name="Boriack R.L."/>
            <person name="Narayan S."/>
            <person name="Rutledge S.L."/>
            <person name="Raff M.L."/>
        </authorList>
    </citation>
    <scope>VARIANTS CPT1AD GLY-316; VAL-343 AND TRP-465</scope>
</reference>
<keyword id="KW-0002">3D-structure</keyword>
<keyword id="KW-0007">Acetylation</keyword>
<keyword id="KW-0012">Acyltransferase</keyword>
<keyword id="KW-0025">Alternative splicing</keyword>
<keyword id="KW-0225">Disease variant</keyword>
<keyword id="KW-0276">Fatty acid metabolism</keyword>
<keyword id="KW-0443">Lipid metabolism</keyword>
<keyword id="KW-0472">Membrane</keyword>
<keyword id="KW-0496">Mitochondrion</keyword>
<keyword id="KW-1000">Mitochondrion outer membrane</keyword>
<keyword id="KW-0944">Nitration</keyword>
<keyword id="KW-0597">Phosphoprotein</keyword>
<keyword id="KW-1267">Proteomics identification</keyword>
<keyword id="KW-1185">Reference proteome</keyword>
<keyword id="KW-0808">Transferase</keyword>
<keyword id="KW-0812">Transmembrane</keyword>
<keyword id="KW-1133">Transmembrane helix</keyword>
<keyword id="KW-0813">Transport</keyword>
<proteinExistence type="evidence at protein level"/>
<organism>
    <name type="scientific">Homo sapiens</name>
    <name type="common">Human</name>
    <dbReference type="NCBI Taxonomy" id="9606"/>
    <lineage>
        <taxon>Eukaryota</taxon>
        <taxon>Metazoa</taxon>
        <taxon>Chordata</taxon>
        <taxon>Craniata</taxon>
        <taxon>Vertebrata</taxon>
        <taxon>Euteleostomi</taxon>
        <taxon>Mammalia</taxon>
        <taxon>Eutheria</taxon>
        <taxon>Euarchontoglires</taxon>
        <taxon>Primates</taxon>
        <taxon>Haplorrhini</taxon>
        <taxon>Catarrhini</taxon>
        <taxon>Hominidae</taxon>
        <taxon>Homo</taxon>
    </lineage>
</organism>
<feature type="initiator methionine" description="Removed" evidence="2">
    <location>
        <position position="1"/>
    </location>
</feature>
<feature type="chain" id="PRO_0000210159" description="Carnitine O-palmitoyltransferase 1, liver isoform">
    <location>
        <begin position="2"/>
        <end position="773"/>
    </location>
</feature>
<feature type="topological domain" description="Cytoplasmic" evidence="3">
    <location>
        <begin position="2"/>
        <end position="47"/>
    </location>
</feature>
<feature type="transmembrane region" description="Helical" evidence="3">
    <location>
        <begin position="48"/>
        <end position="73"/>
    </location>
</feature>
<feature type="topological domain" description="Mitochondrial intermembrane" evidence="3">
    <location>
        <begin position="74"/>
        <end position="102"/>
    </location>
</feature>
<feature type="transmembrane region" description="Helical" evidence="3">
    <location>
        <begin position="103"/>
        <end position="122"/>
    </location>
</feature>
<feature type="topological domain" description="Cytoplasmic" evidence="3">
    <location>
        <begin position="123"/>
        <end position="773"/>
    </location>
</feature>
<feature type="active site" description="Proton acceptor" evidence="1">
    <location>
        <position position="473"/>
    </location>
</feature>
<feature type="binding site" evidence="1">
    <location>
        <begin position="555"/>
        <end position="567"/>
    </location>
    <ligand>
        <name>CoA</name>
        <dbReference type="ChEBI" id="CHEBI:57287"/>
    </ligand>
</feature>
<feature type="binding site" evidence="1">
    <location>
        <position position="589"/>
    </location>
    <ligand>
        <name>(R)-carnitine</name>
        <dbReference type="ChEBI" id="CHEBI:16347"/>
    </ligand>
</feature>
<feature type="binding site" evidence="1">
    <location>
        <position position="602"/>
    </location>
    <ligand>
        <name>(R)-carnitine</name>
        <dbReference type="ChEBI" id="CHEBI:16347"/>
    </ligand>
</feature>
<feature type="modified residue" description="N-acetylalanine" evidence="2">
    <location>
        <position position="2"/>
    </location>
</feature>
<feature type="modified residue" description="3'-nitrotyrosine" evidence="2">
    <location>
        <position position="282"/>
    </location>
</feature>
<feature type="modified residue" description="Phosphothreonine" evidence="2">
    <location>
        <position position="588"/>
    </location>
</feature>
<feature type="modified residue" description="3'-nitrotyrosine" evidence="2">
    <location>
        <position position="589"/>
    </location>
</feature>
<feature type="modified residue" description="Phosphothreonine" evidence="2">
    <location>
        <position position="604"/>
    </location>
</feature>
<feature type="modified residue" description="Phosphoserine" evidence="2">
    <location>
        <position position="741"/>
    </location>
</feature>
<feature type="modified residue" description="Phosphoserine" evidence="2">
    <location>
        <position position="747"/>
    </location>
</feature>
<feature type="splice variant" id="VSP_012167" description="In isoform 2." evidence="17 18">
    <original>DSHRFGRHLKEAMTDIITLFGLSSNSKK</original>
    <variation>GIISQGPSSDT</variation>
    <location>
        <begin position="746"/>
        <end position="773"/>
    </location>
</feature>
<feature type="sequence variant" id="VAR_020546" description="In CPT1AD; dbSNP:rs80356775." evidence="5">
    <original>R</original>
    <variation>C</variation>
    <location>
        <position position="123"/>
    </location>
</feature>
<feature type="sequence variant" id="VAR_020547" description="In dbSNP:rs2229738." evidence="5 7 8">
    <original>A</original>
    <variation>T</variation>
    <location>
        <position position="275"/>
    </location>
</feature>
<feature type="sequence variant" id="VAR_020548" description="In CPT1AD; dbSNP:rs80356789." evidence="5">
    <original>C</original>
    <variation>W</variation>
    <location>
        <position position="304"/>
    </location>
</feature>
<feature type="sequence variant" id="VAR_020549" description="In CPT1AD; dbSNP:rs80356776." evidence="10">
    <original>T</original>
    <variation>I</variation>
    <location>
        <position position="314"/>
    </location>
</feature>
<feature type="sequence variant" id="VAR_046767" description="In CPT1AD; dbSNP:rs80356796." evidence="9">
    <original>R</original>
    <variation>G</variation>
    <location>
        <position position="316"/>
    </location>
</feature>
<feature type="sequence variant" id="VAR_046768" description="In CPT1AD; dbSNP:rs80356783." evidence="9">
    <original>F</original>
    <variation>V</variation>
    <location>
        <position position="343"/>
    </location>
</feature>
<feature type="sequence variant" id="VAR_020550" description="In CPT1AD; decreased stability; dbSNP:rs80356777." evidence="5">
    <original>R</original>
    <variation>W</variation>
    <location>
        <position position="357"/>
    </location>
</feature>
<feature type="sequence variant" id="VAR_020551" description="In CPT1AD; reduced protein levels; dbSNP:rs80356787." evidence="6">
    <original>E</original>
    <variation>G</variation>
    <location>
        <position position="360"/>
    </location>
</feature>
<feature type="sequence variant" id="VAR_020552" description="In CPT1AD; loss of activity." evidence="5">
    <location>
        <position position="395"/>
    </location>
</feature>
<feature type="sequence variant" id="VAR_020553" description="In CPT1AD; decreased activity; dbSNP:rs80356790." evidence="7 8">
    <original>A</original>
    <variation>V</variation>
    <location>
        <position position="414"/>
    </location>
</feature>
<feature type="sequence variant" id="VAR_020554" description="In CPT1AD; loss of activity; dbSNP:rs80356778." evidence="16">
    <original>D</original>
    <variation>G</variation>
    <location>
        <position position="454"/>
    </location>
</feature>
<feature type="sequence variant" id="VAR_046769" description="In CPT1AD; dbSNP:rs80356784." evidence="9">
    <original>G</original>
    <variation>W</variation>
    <location>
        <position position="465"/>
    </location>
</feature>
<feature type="sequence variant" id="VAR_020555" description="In CPT1AD; decreased activity; dbSNP:rs80356779." evidence="5">
    <original>P</original>
    <variation>L</variation>
    <location>
        <position position="479"/>
    </location>
</feature>
<feature type="sequence variant" id="VAR_020556" description="In CPT1AD; dbSNP:rs80356793." evidence="5">
    <original>L</original>
    <variation>P</variation>
    <location>
        <position position="484"/>
    </location>
</feature>
<feature type="sequence variant" id="VAR_020557" description="In CPT1AD; decreased activity; dbSNP:rs80356791." evidence="7 8">
    <original>Y</original>
    <variation>C</variation>
    <location>
        <position position="498"/>
    </location>
</feature>
<feature type="sequence variant" id="VAR_020558" description="In CPT1AD; loss of activity; dbSNP:rs28936374." evidence="8">
    <original>G</original>
    <variation>E</variation>
    <location>
        <position position="709"/>
    </location>
</feature>
<feature type="sequence variant" id="VAR_020559" description="In CPT1AD; loss of activity; loss of carnitine O-palmitoyltransferase activity but not the lysine succinyltransferase activity; dbSNP:rs80356780." evidence="4 8 14">
    <original>G</original>
    <variation>E</variation>
    <location>
        <position position="710"/>
    </location>
</feature>
<feature type="mutagenesis site" description="Loss of carnitine O-palmitoyltransferase activity. No loss of the scaffolding activity." evidence="12 15">
    <original>H</original>
    <variation>A</variation>
    <location>
        <position position="473"/>
    </location>
</feature>
<feature type="sequence conflict" description="In Ref. 1; AAC41748." evidence="19" ref="1">
    <original>P</original>
    <variation>Q</variation>
    <location>
        <position position="479"/>
    </location>
</feature>
<feature type="sequence conflict" description="In Ref. 1; AAC41748." evidence="19" ref="1">
    <original>A</original>
    <variation>T</variation>
    <location>
        <position position="568"/>
    </location>
</feature>
<feature type="helix" evidence="22">
    <location>
        <begin position="4"/>
        <end position="7"/>
    </location>
</feature>
<feature type="strand" evidence="22">
    <location>
        <begin position="9"/>
        <end position="15"/>
    </location>
</feature>
<feature type="strand" evidence="22">
    <location>
        <begin position="18"/>
        <end position="23"/>
    </location>
</feature>
<feature type="helix" evidence="22">
    <location>
        <begin position="25"/>
        <end position="39"/>
    </location>
</feature>
<evidence type="ECO:0000250" key="1">
    <source>
        <dbReference type="UniProtKB" id="P18886"/>
    </source>
</evidence>
<evidence type="ECO:0000250" key="2">
    <source>
        <dbReference type="UniProtKB" id="P32198"/>
    </source>
</evidence>
<evidence type="ECO:0000255" key="3"/>
<evidence type="ECO:0000269" key="4">
    <source>
    </source>
</evidence>
<evidence type="ECO:0000269" key="5">
    <source>
    </source>
</evidence>
<evidence type="ECO:0000269" key="6">
    <source>
    </source>
</evidence>
<evidence type="ECO:0000269" key="7">
    <source>
    </source>
</evidence>
<evidence type="ECO:0000269" key="8">
    <source>
    </source>
</evidence>
<evidence type="ECO:0000269" key="9">
    <source>
    </source>
</evidence>
<evidence type="ECO:0000269" key="10">
    <source>
    </source>
</evidence>
<evidence type="ECO:0000269" key="11">
    <source>
    </source>
</evidence>
<evidence type="ECO:0000269" key="12">
    <source>
    </source>
</evidence>
<evidence type="ECO:0000269" key="13">
    <source>
    </source>
</evidence>
<evidence type="ECO:0000269" key="14">
    <source>
    </source>
</evidence>
<evidence type="ECO:0000269" key="15">
    <source>
    </source>
</evidence>
<evidence type="ECO:0000269" key="16">
    <source>
    </source>
</evidence>
<evidence type="ECO:0000303" key="17">
    <source>
    </source>
</evidence>
<evidence type="ECO:0000303" key="18">
    <source ref="3"/>
</evidence>
<evidence type="ECO:0000305" key="19"/>
<evidence type="ECO:0000305" key="20">
    <source>
    </source>
</evidence>
<evidence type="ECO:0000312" key="21">
    <source>
        <dbReference type="HGNC" id="HGNC:2328"/>
    </source>
</evidence>
<evidence type="ECO:0007829" key="22">
    <source>
        <dbReference type="PDB" id="2LE3"/>
    </source>
</evidence>
<accession>P50416</accession>
<accession>Q8TCU0</accession>
<accession>Q9BWK0</accession>
<comment type="function">
    <text evidence="2 4 8 12 14 15 16">Catalyzes the transfer of the acyl group of long-chain fatty acid-CoA conjugates onto carnitine, an essential step for the mitochondrial uptake of long-chain fatty acids and their subsequent beta-oxidation in the mitochondrion (PubMed:11350182, PubMed:14517221, PubMed:16651524, PubMed:9691089). Also possesses a lysine succinyltransferase activity that can regulate enzymatic activity of substrate proteins such as ENO1 and metabolism independent of its classical carnitine O-palmitoyltransferase activity (PubMed:29425493). Plays an important role in hepatic triglyceride metabolism (By similarity). Also plays a role in inducible regulatory T-cell (iTreg) differentiation once activated by butyryl-CoA that antagonizes malonyl-CoA-mediated CPT1A repression (By similarity). Sustains the IFN-I response by recruiting ZDHCC4 to palmitoylate MAVS at the mitochondria leading to MAVS stabilization and activation (PubMed:38016475). Promotes ROS-induced oxidative stress in liver injury via modulation of NFE2L2 and NLRP3-mediated signaling pathways (By similarity).</text>
</comment>
<comment type="catalytic activity">
    <reaction evidence="4 8 12 16">
        <text>(R)-carnitine + hexadecanoyl-CoA = O-hexadecanoyl-(R)-carnitine + CoA</text>
        <dbReference type="Rhea" id="RHEA:12661"/>
        <dbReference type="ChEBI" id="CHEBI:16347"/>
        <dbReference type="ChEBI" id="CHEBI:17490"/>
        <dbReference type="ChEBI" id="CHEBI:57287"/>
        <dbReference type="ChEBI" id="CHEBI:57379"/>
        <dbReference type="EC" id="2.3.1.21"/>
    </reaction>
    <physiologicalReaction direction="left-to-right" evidence="20">
        <dbReference type="Rhea" id="RHEA:12662"/>
    </physiologicalReaction>
</comment>
<comment type="catalytic activity">
    <reaction evidence="14">
        <text>succinyl-CoA + L-lysyl-[protein] = N(6)-succinyl-L-lysyl-[protein] + CoA + H(+)</text>
        <dbReference type="Rhea" id="RHEA:16261"/>
        <dbReference type="Rhea" id="RHEA-COMP:9752"/>
        <dbReference type="Rhea" id="RHEA-COMP:11877"/>
        <dbReference type="ChEBI" id="CHEBI:15378"/>
        <dbReference type="ChEBI" id="CHEBI:29969"/>
        <dbReference type="ChEBI" id="CHEBI:57287"/>
        <dbReference type="ChEBI" id="CHEBI:57292"/>
        <dbReference type="ChEBI" id="CHEBI:87830"/>
    </reaction>
</comment>
<comment type="activity regulation">
    <text evidence="8">Inhibited by malonyl-CoA.</text>
</comment>
<comment type="biophysicochemical properties">
    <kinetics>
        <KM evidence="4">89 uM for carnitine</KM>
        <KM evidence="8">106.5 uM for carnitine</KM>
        <KM evidence="4">43 uM for palmitoyl-CoA</KM>
        <KM evidence="8">82.8 uM for palmitoyl-CoA</KM>
        <Vmax evidence="4">15.0 nmol/min/mg enzyme toward carnitine</Vmax>
        <Vmax evidence="8">147.8 nmol/min/mg enzyme toward carnitine</Vmax>
        <Vmax evidence="4">40.0 nmol/min/mg enzyme toward palmitoyl-CoA</Vmax>
        <Vmax evidence="8">88.6 nmol/min/mg enzyme toward palmitoyl-CoA</Vmax>
    </kinetics>
</comment>
<comment type="pathway">
    <text>Lipid metabolism; fatty acid beta-oxidation.</text>
</comment>
<comment type="subunit">
    <text evidence="2 15">Homohexamer and homotrimer (By similarity). Identified in a complex that contains at least CPT1A, ACSL1 and VDAC1 (By similarity). Also identified in complexes with ACSL1 and VDAC2 and VDAC3 (By similarity). Interacts with ZDHHC4 (PubMed:38016475).</text>
</comment>
<comment type="subcellular location">
    <subcellularLocation>
        <location evidence="4 8">Mitochondrion outer membrane</location>
        <topology evidence="3">Multi-pass membrane protein</topology>
    </subcellularLocation>
</comment>
<comment type="alternative products">
    <event type="alternative splicing"/>
    <isoform>
        <id>P50416-1</id>
        <name>1</name>
        <sequence type="displayed"/>
    </isoform>
    <isoform>
        <id>P50416-2</id>
        <name>2</name>
        <sequence type="described" ref="VSP_012167"/>
    </isoform>
</comment>
<comment type="tissue specificity">
    <text>Strong expression in kidney and heart, and lower in liver and skeletal muscle.</text>
</comment>
<comment type="induction">
    <text evidence="11">Up-regulated by fatty acids.</text>
</comment>
<comment type="domain">
    <text evidence="13">A conformation change in the N-terminal region spanning the first 42 residues plays an important role in the regulation of enzyme activity by malonyl-CoA.</text>
</comment>
<comment type="disease" evidence="4 5 6 7 8 9 10 14 16">
    <disease id="DI-01321">
        <name>Carnitine palmitoyltransferase 1A deficiency</name>
        <acronym>CPT1AD</acronym>
        <description>Rare autosomal recessive metabolic disorder of long-chain fatty acid oxidation characterized by severe episodes of hypoketotic hypoglycemia usually occurring after fasting or illness. Onset is in infancy or early childhood.</description>
        <dbReference type="MIM" id="255120"/>
    </disease>
    <text>The disease is caused by variants affecting the gene represented in this entry.</text>
</comment>
<comment type="similarity">
    <text evidence="19">Belongs to the carnitine/choline acetyltransferase family.</text>
</comment>
<gene>
    <name evidence="21" type="primary">CPT1A</name>
    <name type="synonym">CPT1</name>
</gene>
<dbReference type="EC" id="2.3.1.21" evidence="4 16"/>
<dbReference type="EC" id="2.3.1.-" evidence="14"/>
<dbReference type="EMBL" id="L39211">
    <property type="protein sequence ID" value="AAC41748.1"/>
    <property type="molecule type" value="mRNA"/>
</dbReference>
<dbReference type="EMBL" id="AJ420747">
    <property type="protein sequence ID" value="CAD12625.1"/>
    <property type="molecule type" value="Genomic_DNA"/>
</dbReference>
<dbReference type="EMBL" id="AJ420748">
    <property type="protein sequence ID" value="CAD59673.1"/>
    <property type="molecule type" value="Genomic_DNA"/>
</dbReference>
<dbReference type="EMBL" id="BT009791">
    <property type="protein sequence ID" value="AAP88793.1"/>
    <property type="molecule type" value="mRNA"/>
</dbReference>
<dbReference type="EMBL" id="BC000185">
    <property type="protein sequence ID" value="AAH00185.1"/>
    <property type="molecule type" value="mRNA"/>
</dbReference>
<dbReference type="CCDS" id="CCDS31624.1">
    <molecule id="P50416-2"/>
</dbReference>
<dbReference type="CCDS" id="CCDS8185.1">
    <molecule id="P50416-1"/>
</dbReference>
<dbReference type="PIR" id="I59351">
    <property type="entry name" value="I59351"/>
</dbReference>
<dbReference type="RefSeq" id="NP_001027017.1">
    <molecule id="P50416-2"/>
    <property type="nucleotide sequence ID" value="NM_001031847.3"/>
</dbReference>
<dbReference type="RefSeq" id="NP_001867.2">
    <molecule id="P50416-1"/>
    <property type="nucleotide sequence ID" value="NM_001876.4"/>
</dbReference>
<dbReference type="RefSeq" id="XP_016872709.1">
    <molecule id="P50416-1"/>
    <property type="nucleotide sequence ID" value="XM_017017220.2"/>
</dbReference>
<dbReference type="RefSeq" id="XP_054223671.1">
    <molecule id="P50416-1"/>
    <property type="nucleotide sequence ID" value="XM_054367696.1"/>
</dbReference>
<dbReference type="PDB" id="2LE3">
    <property type="method" value="NMR"/>
    <property type="chains" value="A=1-42"/>
</dbReference>
<dbReference type="PDBsum" id="2LE3"/>
<dbReference type="BMRB" id="P50416"/>
<dbReference type="SMR" id="P50416"/>
<dbReference type="BioGRID" id="107765">
    <property type="interactions" value="202"/>
</dbReference>
<dbReference type="FunCoup" id="P50416">
    <property type="interactions" value="1203"/>
</dbReference>
<dbReference type="IntAct" id="P50416">
    <property type="interactions" value="86"/>
</dbReference>
<dbReference type="MINT" id="P50416"/>
<dbReference type="STRING" id="9606.ENSP00000265641"/>
<dbReference type="BindingDB" id="P50416"/>
<dbReference type="ChEMBL" id="CHEMBL1293194"/>
<dbReference type="DrugBank" id="DB01016">
    <property type="generic name" value="Glyburide"/>
</dbReference>
<dbReference type="DrugBank" id="DB00583">
    <property type="generic name" value="Levocarnitine"/>
</dbReference>
<dbReference type="DrugBank" id="DB01074">
    <property type="generic name" value="Perhexiline"/>
</dbReference>
<dbReference type="DrugCentral" id="P50416"/>
<dbReference type="SwissLipids" id="SLP:000001056"/>
<dbReference type="TCDB" id="4.C.2.1.3">
    <property type="family name" value="the carnitine o-acyl transferase (carat) family"/>
</dbReference>
<dbReference type="GlyGen" id="P50416">
    <property type="glycosylation" value="3 sites, 1 O-linked glycan (3 sites)"/>
</dbReference>
<dbReference type="iPTMnet" id="P50416"/>
<dbReference type="MetOSite" id="P50416"/>
<dbReference type="PhosphoSitePlus" id="P50416"/>
<dbReference type="SwissPalm" id="P50416"/>
<dbReference type="BioMuta" id="CPT1A"/>
<dbReference type="DMDM" id="56405343"/>
<dbReference type="jPOST" id="P50416"/>
<dbReference type="MassIVE" id="P50416"/>
<dbReference type="PaxDb" id="9606-ENSP00000265641"/>
<dbReference type="PeptideAtlas" id="P50416"/>
<dbReference type="ProteomicsDB" id="56220">
    <molecule id="P50416-1"/>
</dbReference>
<dbReference type="ProteomicsDB" id="56221">
    <molecule id="P50416-2"/>
</dbReference>
<dbReference type="Pumba" id="P50416"/>
<dbReference type="Antibodypedia" id="1640">
    <property type="antibodies" value="435 antibodies from 36 providers"/>
</dbReference>
<dbReference type="DNASU" id="1374"/>
<dbReference type="Ensembl" id="ENST00000265641.10">
    <molecule id="P50416-1"/>
    <property type="protein sequence ID" value="ENSP00000265641.4"/>
    <property type="gene ID" value="ENSG00000110090.13"/>
</dbReference>
<dbReference type="Ensembl" id="ENST00000376618.6">
    <molecule id="P50416-2"/>
    <property type="protein sequence ID" value="ENSP00000365803.2"/>
    <property type="gene ID" value="ENSG00000110090.13"/>
</dbReference>
<dbReference type="Ensembl" id="ENST00000539743.5">
    <molecule id="P50416-1"/>
    <property type="protein sequence ID" value="ENSP00000446108.1"/>
    <property type="gene ID" value="ENSG00000110090.13"/>
</dbReference>
<dbReference type="Ensembl" id="ENST00000540367.5">
    <molecule id="P50416-2"/>
    <property type="protein sequence ID" value="ENSP00000439084.1"/>
    <property type="gene ID" value="ENSG00000110090.13"/>
</dbReference>
<dbReference type="GeneID" id="1374"/>
<dbReference type="KEGG" id="hsa:1374"/>
<dbReference type="MANE-Select" id="ENST00000265641.10">
    <property type="protein sequence ID" value="ENSP00000265641.4"/>
    <property type="RefSeq nucleotide sequence ID" value="NM_001876.4"/>
    <property type="RefSeq protein sequence ID" value="NP_001867.2"/>
</dbReference>
<dbReference type="UCSC" id="uc001oof.5">
    <molecule id="P50416-1"/>
    <property type="organism name" value="human"/>
</dbReference>
<dbReference type="AGR" id="HGNC:2328"/>
<dbReference type="CTD" id="1374"/>
<dbReference type="DisGeNET" id="1374"/>
<dbReference type="GeneCards" id="CPT1A"/>
<dbReference type="GeneReviews" id="CPT1A"/>
<dbReference type="HGNC" id="HGNC:2328">
    <property type="gene designation" value="CPT1A"/>
</dbReference>
<dbReference type="HPA" id="ENSG00000110090">
    <property type="expression patterns" value="Low tissue specificity"/>
</dbReference>
<dbReference type="MalaCards" id="CPT1A"/>
<dbReference type="MIM" id="255120">
    <property type="type" value="phenotype"/>
</dbReference>
<dbReference type="MIM" id="600528">
    <property type="type" value="gene"/>
</dbReference>
<dbReference type="neXtProt" id="NX_P50416"/>
<dbReference type="OpenTargets" id="ENSG00000110090"/>
<dbReference type="Orphanet" id="156">
    <property type="disease" value="Carnitine palmitoyl transferase 1A deficiency"/>
</dbReference>
<dbReference type="PharmGKB" id="PA26847"/>
<dbReference type="VEuPathDB" id="HostDB:ENSG00000110090"/>
<dbReference type="eggNOG" id="KOG3716">
    <property type="taxonomic scope" value="Eukaryota"/>
</dbReference>
<dbReference type="GeneTree" id="ENSGT01130000278324"/>
<dbReference type="HOGENOM" id="CLU_013513_2_1_1"/>
<dbReference type="InParanoid" id="P50416"/>
<dbReference type="OMA" id="AWIQMAL"/>
<dbReference type="OrthoDB" id="240216at2759"/>
<dbReference type="PAN-GO" id="P50416">
    <property type="GO annotations" value="4 GO annotations based on evolutionary models"/>
</dbReference>
<dbReference type="PhylomeDB" id="P50416"/>
<dbReference type="TreeFam" id="TF313836"/>
<dbReference type="BioCyc" id="MetaCyc:HS03286-MONOMER"/>
<dbReference type="BRENDA" id="2.3.1.21">
    <property type="organism ID" value="2681"/>
</dbReference>
<dbReference type="PathwayCommons" id="P50416"/>
<dbReference type="Reactome" id="R-HSA-1368082">
    <property type="pathway name" value="RORA activates gene expression"/>
</dbReference>
<dbReference type="Reactome" id="R-HSA-1989781">
    <property type="pathway name" value="PPARA activates gene expression"/>
</dbReference>
<dbReference type="Reactome" id="R-HSA-200425">
    <property type="pathway name" value="Carnitine shuttle"/>
</dbReference>
<dbReference type="SABIO-RK" id="P50416"/>
<dbReference type="SignaLink" id="P50416"/>
<dbReference type="SIGNOR" id="P50416"/>
<dbReference type="UniPathway" id="UPA00659"/>
<dbReference type="BioGRID-ORCS" id="1374">
    <property type="hits" value="14 hits in 1172 CRISPR screens"/>
</dbReference>
<dbReference type="CD-CODE" id="FB4E32DD">
    <property type="entry name" value="Presynaptic clusters and postsynaptic densities"/>
</dbReference>
<dbReference type="ChiTaRS" id="CPT1A">
    <property type="organism name" value="human"/>
</dbReference>
<dbReference type="EvolutionaryTrace" id="P50416"/>
<dbReference type="GenomeRNAi" id="1374"/>
<dbReference type="Pharos" id="P50416">
    <property type="development level" value="Tchem"/>
</dbReference>
<dbReference type="PRO" id="PR:P50416"/>
<dbReference type="Proteomes" id="UP000005640">
    <property type="component" value="Chromosome 11"/>
</dbReference>
<dbReference type="RNAct" id="P50416">
    <property type="molecule type" value="protein"/>
</dbReference>
<dbReference type="Bgee" id="ENSG00000110090">
    <property type="expression patterns" value="Expressed in jejunal mucosa and 199 other cell types or tissues"/>
</dbReference>
<dbReference type="ExpressionAtlas" id="P50416">
    <property type="expression patterns" value="baseline and differential"/>
</dbReference>
<dbReference type="GO" id="GO:0016020">
    <property type="term" value="C:membrane"/>
    <property type="evidence" value="ECO:0007005"/>
    <property type="project" value="UniProtKB"/>
</dbReference>
<dbReference type="GO" id="GO:0005741">
    <property type="term" value="C:mitochondrial outer membrane"/>
    <property type="evidence" value="ECO:0000315"/>
    <property type="project" value="UniProtKB"/>
</dbReference>
<dbReference type="GO" id="GO:0005739">
    <property type="term" value="C:mitochondrion"/>
    <property type="evidence" value="ECO:0000314"/>
    <property type="project" value="HPA"/>
</dbReference>
<dbReference type="GO" id="GO:0004095">
    <property type="term" value="F:carnitine O-palmitoyltransferase activity"/>
    <property type="evidence" value="ECO:0000314"/>
    <property type="project" value="UniProtKB"/>
</dbReference>
<dbReference type="GO" id="GO:0042802">
    <property type="term" value="F:identical protein binding"/>
    <property type="evidence" value="ECO:0007669"/>
    <property type="project" value="Ensembl"/>
</dbReference>
<dbReference type="GO" id="GO:0030674">
    <property type="term" value="F:protein-macromolecule adaptor activity"/>
    <property type="evidence" value="ECO:0000314"/>
    <property type="project" value="UniProt"/>
</dbReference>
<dbReference type="GO" id="GO:0046222">
    <property type="term" value="P:aflatoxin metabolic process"/>
    <property type="evidence" value="ECO:0007669"/>
    <property type="project" value="Ensembl"/>
</dbReference>
<dbReference type="GO" id="GO:0009437">
    <property type="term" value="P:carnitine metabolic process"/>
    <property type="evidence" value="ECO:0000314"/>
    <property type="project" value="UniProtKB"/>
</dbReference>
<dbReference type="GO" id="GO:0006853">
    <property type="term" value="P:carnitine shuttle"/>
    <property type="evidence" value="ECO:0000304"/>
    <property type="project" value="Reactome"/>
</dbReference>
<dbReference type="GO" id="GO:0071398">
    <property type="term" value="P:cellular response to fatty acid"/>
    <property type="evidence" value="ECO:0007669"/>
    <property type="project" value="Ensembl"/>
</dbReference>
<dbReference type="GO" id="GO:0042755">
    <property type="term" value="P:eating behavior"/>
    <property type="evidence" value="ECO:0007669"/>
    <property type="project" value="Ensembl"/>
</dbReference>
<dbReference type="GO" id="GO:0030855">
    <property type="term" value="P:epithelial cell differentiation"/>
    <property type="evidence" value="ECO:0000270"/>
    <property type="project" value="UniProtKB"/>
</dbReference>
<dbReference type="GO" id="GO:0006635">
    <property type="term" value="P:fatty acid beta-oxidation"/>
    <property type="evidence" value="ECO:0000304"/>
    <property type="project" value="ProtInc"/>
</dbReference>
<dbReference type="GO" id="GO:0006631">
    <property type="term" value="P:fatty acid metabolic process"/>
    <property type="evidence" value="ECO:0000318"/>
    <property type="project" value="GO_Central"/>
</dbReference>
<dbReference type="GO" id="GO:0006006">
    <property type="term" value="P:glucose metabolic process"/>
    <property type="evidence" value="ECO:0007669"/>
    <property type="project" value="Ensembl"/>
</dbReference>
<dbReference type="GO" id="GO:0097421">
    <property type="term" value="P:liver regeneration"/>
    <property type="evidence" value="ECO:0007669"/>
    <property type="project" value="Ensembl"/>
</dbReference>
<dbReference type="GO" id="GO:0001676">
    <property type="term" value="P:long-chain fatty acid metabolic process"/>
    <property type="evidence" value="ECO:0000314"/>
    <property type="project" value="UniProtKB"/>
</dbReference>
<dbReference type="GO" id="GO:0032000">
    <property type="term" value="P:positive regulation of fatty acid beta-oxidation"/>
    <property type="evidence" value="ECO:0007669"/>
    <property type="project" value="Ensembl"/>
</dbReference>
<dbReference type="GO" id="GO:0045089">
    <property type="term" value="P:positive regulation of innate immune response"/>
    <property type="evidence" value="ECO:0000314"/>
    <property type="project" value="UniProt"/>
</dbReference>
<dbReference type="GO" id="GO:0050796">
    <property type="term" value="P:regulation of insulin secretion"/>
    <property type="evidence" value="ECO:0007669"/>
    <property type="project" value="Ensembl"/>
</dbReference>
<dbReference type="GO" id="GO:0010883">
    <property type="term" value="P:regulation of lipid storage"/>
    <property type="evidence" value="ECO:0007669"/>
    <property type="project" value="Ensembl"/>
</dbReference>
<dbReference type="GO" id="GO:0043279">
    <property type="term" value="P:response to alkaloid"/>
    <property type="evidence" value="ECO:0007669"/>
    <property type="project" value="Ensembl"/>
</dbReference>
<dbReference type="GO" id="GO:0045471">
    <property type="term" value="P:response to ethanol"/>
    <property type="evidence" value="ECO:0007669"/>
    <property type="project" value="Ensembl"/>
</dbReference>
<dbReference type="GO" id="GO:0001666">
    <property type="term" value="P:response to hypoxia"/>
    <property type="evidence" value="ECO:0007669"/>
    <property type="project" value="Ensembl"/>
</dbReference>
<dbReference type="GO" id="GO:0007584">
    <property type="term" value="P:response to nutrient"/>
    <property type="evidence" value="ECO:0007669"/>
    <property type="project" value="Ensembl"/>
</dbReference>
<dbReference type="GO" id="GO:1904772">
    <property type="term" value="P:response to tetrachloromethane"/>
    <property type="evidence" value="ECO:0007669"/>
    <property type="project" value="Ensembl"/>
</dbReference>
<dbReference type="GO" id="GO:0009410">
    <property type="term" value="P:response to xenobiotic stimulus"/>
    <property type="evidence" value="ECO:0007669"/>
    <property type="project" value="Ensembl"/>
</dbReference>
<dbReference type="GO" id="GO:0006641">
    <property type="term" value="P:triglyceride metabolic process"/>
    <property type="evidence" value="ECO:0007669"/>
    <property type="project" value="Ensembl"/>
</dbReference>
<dbReference type="FunFam" id="3.30.559.70:FF:000001">
    <property type="entry name" value="Carnitine O-palmitoyltransferase 1, liver isoform"/>
    <property type="match status" value="1"/>
</dbReference>
<dbReference type="FunFam" id="3.30.559.10:FF:000002">
    <property type="entry name" value="carnitine O-palmitoyltransferase 1, liver isoform"/>
    <property type="match status" value="1"/>
</dbReference>
<dbReference type="Gene3D" id="6.10.250.1760">
    <property type="match status" value="1"/>
</dbReference>
<dbReference type="Gene3D" id="3.30.559.10">
    <property type="entry name" value="Chloramphenicol acetyltransferase-like domain"/>
    <property type="match status" value="1"/>
</dbReference>
<dbReference type="Gene3D" id="3.30.559.70">
    <property type="entry name" value="Choline/Carnitine o-acyltransferase, domain 2"/>
    <property type="match status" value="1"/>
</dbReference>
<dbReference type="InterPro" id="IPR000542">
    <property type="entry name" value="Carn_acyl_trans"/>
</dbReference>
<dbReference type="InterPro" id="IPR023213">
    <property type="entry name" value="CAT-like_dom_sf"/>
</dbReference>
<dbReference type="InterPro" id="IPR039551">
    <property type="entry name" value="Cho/carn_acyl_trans"/>
</dbReference>
<dbReference type="InterPro" id="IPR042231">
    <property type="entry name" value="Cho/carn_acyl_trans_2"/>
</dbReference>
<dbReference type="InterPro" id="IPR032476">
    <property type="entry name" value="CPT_N"/>
</dbReference>
<dbReference type="PANTHER" id="PTHR22589">
    <property type="entry name" value="CARNITINE O-ACYLTRANSFERASE"/>
    <property type="match status" value="1"/>
</dbReference>
<dbReference type="PANTHER" id="PTHR22589:SF74">
    <property type="entry name" value="CARNITINE O-PALMITOYLTRANSFERASE 1, LIVER ISOFORM"/>
    <property type="match status" value="1"/>
</dbReference>
<dbReference type="Pfam" id="PF00755">
    <property type="entry name" value="Carn_acyltransf"/>
    <property type="match status" value="1"/>
</dbReference>
<dbReference type="Pfam" id="PF16484">
    <property type="entry name" value="CPT_N"/>
    <property type="match status" value="1"/>
</dbReference>
<dbReference type="SUPFAM" id="SSF52777">
    <property type="entry name" value="CoA-dependent acyltransferases"/>
    <property type="match status" value="2"/>
</dbReference>
<dbReference type="PROSITE" id="PS00439">
    <property type="entry name" value="ACYLTRANSF_C_1"/>
    <property type="match status" value="1"/>
</dbReference>
<dbReference type="PROSITE" id="PS00440">
    <property type="entry name" value="ACYLTRANSF_C_2"/>
    <property type="match status" value="1"/>
</dbReference>
<sequence length="773" mass="88368">MAEAHQAVAFQFTVTPDGIDLRLSHEALRQIYLSGLHSWKKKFIRFKNGIITGVYPASPSSWLIVVVGVMTTMYAKIDPSLGIIAKINRTLETANCMSSQTKNVVSGVLFGTGLWVALIVTMRYSLKVLLSYHGWMFTEHGKMSRATKIWMGMVKIFSGRKPMLYSFQTSLPRLPVPAVKDTVNRYLQSVRPLMKEEDFKRMTALAQDFAVGLGPRLQWYLKLKSWWATNYVSDWWEEYIYLRGRGPLMVNSNYYAMDLLYILPTHIQAARAGNAIHAILLYRRKLDREEIKPIRLLGSTIPLCSAQWERMFNTSRIPGEETDTIQHMRDSKHIVVYHRGRYFKVWLYHDGRLLKPREMEQQMQRILDNTSEPQPGEARLAALTAGDRVPWARCRQAYFGRGKNKQSLDAVEKAAFFVTLDETEEGYRSEDPDTSMDSYAKSLLHGRCYDRWFDKSFTFVVFKNGKMGLNAEHSWADAPIVAHLWEYVMSIDSLQLGYAEDGHCKGDINPNIPYPTRLQWDIPGECQEVIETSLNTANLLANDVDFHSFPFVAFGKGIIKKCRTSPDAFVQLALQLAHYKDMGKFCLTYEASMTRLFREGRTETVRSCTTESCDFVRAMVDPAQTVEQRLKLFKLASEKHQHMYRLAMTGSGIDRHLFCLYVVSKYLAVESPFLKEVLSEPWRLSTSQTPQQQVELFDLENNPEYVSSGGGFGPVADDGYGVSYILVGENLINFHISSKFSCPETDSHRFGRHLKEAMTDIITLFGLSSNSKK</sequence>
<protein>
    <recommendedName>
        <fullName>Carnitine O-palmitoyltransferase 1, liver isoform</fullName>
        <shortName>CPT1-L</shortName>
        <ecNumber evidence="4 16">2.3.1.21</ecNumber>
    </recommendedName>
    <alternativeName>
        <fullName>Carnitine O-palmitoyltransferase I, liver isoform</fullName>
        <shortName>CPT I</shortName>
        <shortName>CPTI-L</shortName>
    </alternativeName>
    <alternativeName>
        <fullName>Carnitine palmitoyltransferase 1A</fullName>
    </alternativeName>
    <alternativeName>
        <fullName>Succinyltransferase CPT1A</fullName>
        <ecNumber evidence="14">2.3.1.-</ecNumber>
    </alternativeName>
</protein>